<organism>
    <name type="scientific">Burkholderia thailandensis (strain ATCC 700388 / DSM 13276 / CCUG 48851 / CIP 106301 / E264)</name>
    <dbReference type="NCBI Taxonomy" id="271848"/>
    <lineage>
        <taxon>Bacteria</taxon>
        <taxon>Pseudomonadati</taxon>
        <taxon>Pseudomonadota</taxon>
        <taxon>Betaproteobacteria</taxon>
        <taxon>Burkholderiales</taxon>
        <taxon>Burkholderiaceae</taxon>
        <taxon>Burkholderia</taxon>
        <taxon>pseudomallei group</taxon>
    </lineage>
</organism>
<dbReference type="EMBL" id="CP000086">
    <property type="protein sequence ID" value="ABC38923.1"/>
    <property type="molecule type" value="Genomic_DNA"/>
</dbReference>
<dbReference type="RefSeq" id="WP_009892916.1">
    <property type="nucleotide sequence ID" value="NZ_CP008785.1"/>
</dbReference>
<dbReference type="SMR" id="Q2T117"/>
<dbReference type="GeneID" id="45120336"/>
<dbReference type="KEGG" id="bte:BTH_I0575"/>
<dbReference type="HOGENOM" id="CLU_009039_0_0_4"/>
<dbReference type="Proteomes" id="UP000001930">
    <property type="component" value="Chromosome I"/>
</dbReference>
<dbReference type="GO" id="GO:0009279">
    <property type="term" value="C:cell outer membrane"/>
    <property type="evidence" value="ECO:0007669"/>
    <property type="project" value="UniProtKB-SubCell"/>
</dbReference>
<dbReference type="GO" id="GO:1990351">
    <property type="term" value="C:transporter complex"/>
    <property type="evidence" value="ECO:0007669"/>
    <property type="project" value="TreeGrafter"/>
</dbReference>
<dbReference type="GO" id="GO:0043165">
    <property type="term" value="P:Gram-negative-bacterium-type cell outer membrane assembly"/>
    <property type="evidence" value="ECO:0007669"/>
    <property type="project" value="UniProtKB-UniRule"/>
</dbReference>
<dbReference type="GO" id="GO:0015920">
    <property type="term" value="P:lipopolysaccharide transport"/>
    <property type="evidence" value="ECO:0007669"/>
    <property type="project" value="InterPro"/>
</dbReference>
<dbReference type="HAMAP" id="MF_01411">
    <property type="entry name" value="LPS_assembly_LptD"/>
    <property type="match status" value="1"/>
</dbReference>
<dbReference type="InterPro" id="IPR020889">
    <property type="entry name" value="LipoPS_assembly_LptD"/>
</dbReference>
<dbReference type="InterPro" id="IPR050218">
    <property type="entry name" value="LptD"/>
</dbReference>
<dbReference type="InterPro" id="IPR007543">
    <property type="entry name" value="LptD_C"/>
</dbReference>
<dbReference type="PANTHER" id="PTHR30189">
    <property type="entry name" value="LPS-ASSEMBLY PROTEIN"/>
    <property type="match status" value="1"/>
</dbReference>
<dbReference type="PANTHER" id="PTHR30189:SF1">
    <property type="entry name" value="LPS-ASSEMBLY PROTEIN LPTD"/>
    <property type="match status" value="1"/>
</dbReference>
<dbReference type="Pfam" id="PF04453">
    <property type="entry name" value="LptD"/>
    <property type="match status" value="1"/>
</dbReference>
<reference key="1">
    <citation type="journal article" date="2005" name="BMC Genomics">
        <title>Bacterial genome adaptation to niches: divergence of the potential virulence genes in three Burkholderia species of different survival strategies.</title>
        <authorList>
            <person name="Kim H.S."/>
            <person name="Schell M.A."/>
            <person name="Yu Y."/>
            <person name="Ulrich R.L."/>
            <person name="Sarria S.H."/>
            <person name="Nierman W.C."/>
            <person name="DeShazer D."/>
        </authorList>
    </citation>
    <scope>NUCLEOTIDE SEQUENCE [LARGE SCALE GENOMIC DNA]</scope>
    <source>
        <strain>ATCC 700388 / DSM 13276 / CCUG 48851 / CIP 106301 / E264</strain>
    </source>
</reference>
<gene>
    <name evidence="1" type="primary">lptD</name>
    <name type="synonym">imp</name>
    <name type="synonym">ostA</name>
    <name type="ordered locus">BTH_I0575</name>
</gene>
<feature type="signal peptide" evidence="1">
    <location>
        <begin position="1"/>
        <end position="39"/>
    </location>
</feature>
<feature type="chain" id="PRO_0000281596" description="LPS-assembly protein LptD">
    <location>
        <begin position="40"/>
        <end position="787"/>
    </location>
</feature>
<evidence type="ECO:0000255" key="1">
    <source>
        <dbReference type="HAMAP-Rule" id="MF_01411"/>
    </source>
</evidence>
<protein>
    <recommendedName>
        <fullName evidence="1">LPS-assembly protein LptD</fullName>
    </recommendedName>
</protein>
<proteinExistence type="inferred from homology"/>
<sequence>MPRKTLLPLVPACDAAPRRKRLAAALLAVPGLVPAVSQAQLSGAAAEPQTFGSPWDLRLAPQLDEHPQKQGGKPATFVLADHTGGTADQDLAAKGSAEIRRGNAVVKADAIHYDQDTDMADAYGKVTVANGGTTFSGPEAHLKVEANQGFMTTPKYHFTATGGSGSAERVQLLDSERSVFTNGTYTGCQCSTNPAWYIRGSEFDFDTGADEGVARNGVLFFQGVPLFGSPWLTFPLSGERRSGFLPPTFSPFSSTNGIEVSLPYYFNIAPNRDLTITPHIISKRGIFTQATFRYLSTNYSGALTGEYLPDDRIAHRNRYAIFWQHQQNFGNGFGGYIYYNKVSDNLYPEELGSTNQFVNGIQTVYQQEAGLTYNDGPWSVLGRYQHWQTLPPAVAPYGREPQLNVKYAKYNVGGFDFGAEADYSRFRITTADQPEGDRVMFNPYVSYGLYGPGYFFVPKAQLHIASYDLTTTTGGVPDQAKRFTYSIPTLSLDTGLVFDRSVRLFGQDYIQTLEPRLFYVYTPYRNQSNAPLFDTAVSDFGLAEIFTPNTFVGNDRIADANRLTAALTTRFINPATGDERARFVIAQQYYFTDQRVTLLPTEAPATARHSDLILGASVKLGAGFASETAFQYNVDNNQLVKSSVGFGYSPGERRVINVGYRYTRQNPTLSNEPINQILMSAQWPLTRRLYAVGRLNYDLASSRVVDGLVGFQYDADCWAFGVGVQRYANGLNTSGQQNSSTRVLAQLVLKGLTSIDNGLVTAFRAGVQGYTPLPPAPAPLSRFSNYD</sequence>
<keyword id="KW-0998">Cell outer membrane</keyword>
<keyword id="KW-0472">Membrane</keyword>
<keyword id="KW-0732">Signal</keyword>
<accession>Q2T117</accession>
<name>LPTD_BURTA</name>
<comment type="function">
    <text evidence="1">Together with LptE, is involved in the assembly of lipopolysaccharide (LPS) at the surface of the outer membrane.</text>
</comment>
<comment type="subunit">
    <text evidence="1">Component of the lipopolysaccharide transport and assembly complex. Interacts with LptE and LptA.</text>
</comment>
<comment type="subcellular location">
    <subcellularLocation>
        <location evidence="1">Cell outer membrane</location>
    </subcellularLocation>
</comment>
<comment type="similarity">
    <text evidence="1">Belongs to the LptD family.</text>
</comment>